<keyword id="KW-0413">Isomerase</keyword>
<keyword id="KW-0819">tRNA processing</keyword>
<comment type="function">
    <text evidence="1">Formation of pseudouridine at positions 38, 39 and 40 in the anticodon stem and loop of transfer RNAs.</text>
</comment>
<comment type="catalytic activity">
    <reaction evidence="1">
        <text>uridine(38/39/40) in tRNA = pseudouridine(38/39/40) in tRNA</text>
        <dbReference type="Rhea" id="RHEA:22376"/>
        <dbReference type="Rhea" id="RHEA-COMP:10085"/>
        <dbReference type="Rhea" id="RHEA-COMP:10087"/>
        <dbReference type="ChEBI" id="CHEBI:65314"/>
        <dbReference type="ChEBI" id="CHEBI:65315"/>
        <dbReference type="EC" id="5.4.99.12"/>
    </reaction>
</comment>
<comment type="subunit">
    <text evidence="1">Homodimer.</text>
</comment>
<comment type="similarity">
    <text evidence="1">Belongs to the tRNA pseudouridine synthase TruA family.</text>
</comment>
<organism>
    <name type="scientific">Bacillus cereus (strain ATCC 10987 / NRS 248)</name>
    <dbReference type="NCBI Taxonomy" id="222523"/>
    <lineage>
        <taxon>Bacteria</taxon>
        <taxon>Bacillati</taxon>
        <taxon>Bacillota</taxon>
        <taxon>Bacilli</taxon>
        <taxon>Bacillales</taxon>
        <taxon>Bacillaceae</taxon>
        <taxon>Bacillus</taxon>
        <taxon>Bacillus cereus group</taxon>
    </lineage>
</organism>
<evidence type="ECO:0000255" key="1">
    <source>
        <dbReference type="HAMAP-Rule" id="MF_00171"/>
    </source>
</evidence>
<sequence>MHNYKLTIQYDGARFKGWQRLGNNDNTIQGKIESVISEMVGKETEIIGCSRTDAGVHALNQVANFQSDEKLVEHKVKKYLNQYLPNDISITNVEEVHDRFHARYNSKAKTYLYKIWNEEHTNPFMRKYSMHVNKKLNVKSMKEAAKHLVGSHDFTAFSNAKSKKKSMVREVYTLEVMEEAGFVQIRVSGNGFLHNMVRKIVGALIEVGLGQLDAEAIPQILEAKQRNQINCLAEASGLYLENVEF</sequence>
<accession>Q73E17</accession>
<name>TRUA2_BACC1</name>
<reference key="1">
    <citation type="journal article" date="2004" name="Nucleic Acids Res.">
        <title>The genome sequence of Bacillus cereus ATCC 10987 reveals metabolic adaptations and a large plasmid related to Bacillus anthracis pXO1.</title>
        <authorList>
            <person name="Rasko D.A."/>
            <person name="Ravel J."/>
            <person name="Oekstad O.A."/>
            <person name="Helgason E."/>
            <person name="Cer R.Z."/>
            <person name="Jiang L."/>
            <person name="Shores K.A."/>
            <person name="Fouts D.E."/>
            <person name="Tourasse N.J."/>
            <person name="Angiuoli S.V."/>
            <person name="Kolonay J.F."/>
            <person name="Nelson W.C."/>
            <person name="Kolstoe A.-B."/>
            <person name="Fraser C.M."/>
            <person name="Read T.D."/>
        </authorList>
    </citation>
    <scope>NUCLEOTIDE SEQUENCE [LARGE SCALE GENOMIC DNA]</scope>
    <source>
        <strain>ATCC 10987 / NRS 248</strain>
    </source>
</reference>
<proteinExistence type="inferred from homology"/>
<feature type="chain" id="PRO_0000057322" description="tRNA pseudouridine synthase A 2">
    <location>
        <begin position="1"/>
        <end position="245"/>
    </location>
</feature>
<feature type="active site" description="Nucleophile" evidence="1">
    <location>
        <position position="53"/>
    </location>
</feature>
<feature type="binding site" evidence="1">
    <location>
        <position position="111"/>
    </location>
    <ligand>
        <name>substrate</name>
    </ligand>
</feature>
<gene>
    <name evidence="1" type="primary">truA2</name>
    <name type="ordered locus">BCE_0543</name>
</gene>
<dbReference type="EC" id="5.4.99.12" evidence="1"/>
<dbReference type="EMBL" id="AE017194">
    <property type="protein sequence ID" value="AAS39478.1"/>
    <property type="molecule type" value="Genomic_DNA"/>
</dbReference>
<dbReference type="SMR" id="Q73E17"/>
<dbReference type="KEGG" id="bca:BCE_0543"/>
<dbReference type="HOGENOM" id="CLU_014673_0_1_9"/>
<dbReference type="Proteomes" id="UP000002527">
    <property type="component" value="Chromosome"/>
</dbReference>
<dbReference type="GO" id="GO:0003723">
    <property type="term" value="F:RNA binding"/>
    <property type="evidence" value="ECO:0007669"/>
    <property type="project" value="InterPro"/>
</dbReference>
<dbReference type="GO" id="GO:0160147">
    <property type="term" value="F:tRNA pseudouridine(38-40) synthase activity"/>
    <property type="evidence" value="ECO:0007669"/>
    <property type="project" value="UniProtKB-EC"/>
</dbReference>
<dbReference type="GO" id="GO:0031119">
    <property type="term" value="P:tRNA pseudouridine synthesis"/>
    <property type="evidence" value="ECO:0007669"/>
    <property type="project" value="UniProtKB-UniRule"/>
</dbReference>
<dbReference type="CDD" id="cd02570">
    <property type="entry name" value="PseudoU_synth_EcTruA"/>
    <property type="match status" value="1"/>
</dbReference>
<dbReference type="FunFam" id="3.30.70.580:FF:000001">
    <property type="entry name" value="tRNA pseudouridine synthase A"/>
    <property type="match status" value="1"/>
</dbReference>
<dbReference type="Gene3D" id="3.30.70.660">
    <property type="entry name" value="Pseudouridine synthase I, catalytic domain, C-terminal subdomain"/>
    <property type="match status" value="1"/>
</dbReference>
<dbReference type="Gene3D" id="3.30.70.580">
    <property type="entry name" value="Pseudouridine synthase I, catalytic domain, N-terminal subdomain"/>
    <property type="match status" value="1"/>
</dbReference>
<dbReference type="HAMAP" id="MF_00171">
    <property type="entry name" value="TruA"/>
    <property type="match status" value="1"/>
</dbReference>
<dbReference type="InterPro" id="IPR020103">
    <property type="entry name" value="PsdUridine_synth_cat_dom_sf"/>
</dbReference>
<dbReference type="InterPro" id="IPR001406">
    <property type="entry name" value="PsdUridine_synth_TruA"/>
</dbReference>
<dbReference type="InterPro" id="IPR020097">
    <property type="entry name" value="PsdUridine_synth_TruA_a/b_dom"/>
</dbReference>
<dbReference type="InterPro" id="IPR020095">
    <property type="entry name" value="PsdUridine_synth_TruA_C"/>
</dbReference>
<dbReference type="InterPro" id="IPR020094">
    <property type="entry name" value="TruA/RsuA/RluB/E/F_N"/>
</dbReference>
<dbReference type="NCBIfam" id="TIGR00071">
    <property type="entry name" value="hisT_truA"/>
    <property type="match status" value="1"/>
</dbReference>
<dbReference type="PANTHER" id="PTHR11142">
    <property type="entry name" value="PSEUDOURIDYLATE SYNTHASE"/>
    <property type="match status" value="1"/>
</dbReference>
<dbReference type="PANTHER" id="PTHR11142:SF22">
    <property type="entry name" value="TRNA PSEUDOURIDINE SYNTHASE A 2"/>
    <property type="match status" value="1"/>
</dbReference>
<dbReference type="Pfam" id="PF01416">
    <property type="entry name" value="PseudoU_synth_1"/>
    <property type="match status" value="2"/>
</dbReference>
<dbReference type="PIRSF" id="PIRSF001430">
    <property type="entry name" value="tRNA_psdUrid_synth"/>
    <property type="match status" value="1"/>
</dbReference>
<dbReference type="SUPFAM" id="SSF55120">
    <property type="entry name" value="Pseudouridine synthase"/>
    <property type="match status" value="1"/>
</dbReference>
<protein>
    <recommendedName>
        <fullName evidence="1">tRNA pseudouridine synthase A 2</fullName>
        <ecNumber evidence="1">5.4.99.12</ecNumber>
    </recommendedName>
    <alternativeName>
        <fullName evidence="1">tRNA pseudouridine(38-40) synthase</fullName>
    </alternativeName>
    <alternativeName>
        <fullName evidence="1">tRNA pseudouridylate synthase I 2</fullName>
    </alternativeName>
    <alternativeName>
        <fullName evidence="1">tRNA-uridine isomerase I 2</fullName>
    </alternativeName>
</protein>